<sequence>MASSRTLGTFRLPPLPTIREIIKLFRLQAVKQLSQNFLLDLRLTDKIVRKAGNLTNAYVYEVGPGPGGITRSILNAGVAELLVVEKDSRFIPGLQMLSDAAPGKLRIVHGDVLTFKIERAFPESLKRQWEDDPPNVHIIGNLPFSVSTPLIIKWLENVSQRNGPFAYGRTRMMLTFQKEVAERLTATTGSKQRSRLSIMAQYLCDVQHILTIPGQAFVPKPEVDSGVVHFTPLTRPRIKQPFKLVEKVVQNAFQFRRKYCHRGLGMLFPEARRLESTGKLLELADVDPTLRPTQLTVSHFKSLCDVYRKMCDEDPHLFAYNFREELRQKSKKEDDKQSCRL</sequence>
<accession>Q2TBQ0</accession>
<comment type="function">
    <text evidence="2">Mitochondrial methyltransferase which uses S-adenosyl methionine to dimethylate two highly conserved adjacent adenosine residues (A1583 and A1584) within the loop of helix 45 at the 3-prime end of 12S rRNA, thereby regulating the assembly or stability of the small subunit of the mitochondrial ribosome. Also required for basal transcription of mitochondrial DNA, probably via its interaction with POLRMT and TFAM. Stimulates transcription independently of the methyltransferase activity.</text>
</comment>
<comment type="catalytic activity">
    <reaction evidence="2">
        <text>adenosine(N)/adenosine(N+1) in rRNA + 4 S-adenosyl-L-methionine = N(6)-dimethyladenosine(N)/N(6)-dimethyladenosine(N+1) in rRNA + 4 S-adenosyl-L-homocysteine + 4 H(+)</text>
        <dbReference type="Rhea" id="RHEA:78527"/>
        <dbReference type="Rhea" id="RHEA-COMP:19105"/>
        <dbReference type="Rhea" id="RHEA-COMP:19106"/>
        <dbReference type="ChEBI" id="CHEBI:15378"/>
        <dbReference type="ChEBI" id="CHEBI:57856"/>
        <dbReference type="ChEBI" id="CHEBI:59789"/>
        <dbReference type="ChEBI" id="CHEBI:74411"/>
        <dbReference type="ChEBI" id="CHEBI:74493"/>
    </reaction>
</comment>
<comment type="subunit">
    <text evidence="1 2">Interacts with mitochondrial RNA polymerase POLRMT. Interacts with TFAM (By similarity). Bound to the maturing mtSSU until the late stages of assembly (By similarity).</text>
</comment>
<comment type="subcellular location">
    <subcellularLocation>
        <location evidence="2">Mitochondrion</location>
    </subcellularLocation>
</comment>
<comment type="alternative products">
    <event type="alternative splicing"/>
    <isoform>
        <id>Q2TBQ0-1</id>
        <name>1</name>
        <sequence type="displayed"/>
    </isoform>
    <isoform>
        <id>Q2TBQ0-2</id>
        <name>2</name>
        <sequence type="described" ref="VSP_022489 VSP_022490"/>
    </isoform>
</comment>
<comment type="similarity">
    <text evidence="5">Belongs to the class I-like SAM-binding methyltransferase superfamily. rRNA adenine N(6)-methyltransferase family. KsgA subfamily.</text>
</comment>
<organism>
    <name type="scientific">Bos taurus</name>
    <name type="common">Bovine</name>
    <dbReference type="NCBI Taxonomy" id="9913"/>
    <lineage>
        <taxon>Eukaryota</taxon>
        <taxon>Metazoa</taxon>
        <taxon>Chordata</taxon>
        <taxon>Craniata</taxon>
        <taxon>Vertebrata</taxon>
        <taxon>Euteleostomi</taxon>
        <taxon>Mammalia</taxon>
        <taxon>Eutheria</taxon>
        <taxon>Laurasiatheria</taxon>
        <taxon>Artiodactyla</taxon>
        <taxon>Ruminantia</taxon>
        <taxon>Pecora</taxon>
        <taxon>Bovidae</taxon>
        <taxon>Bovinae</taxon>
        <taxon>Bos</taxon>
    </lineage>
</organism>
<protein>
    <recommendedName>
        <fullName>Mitochondrial dimethyladenosine transferase 1</fullName>
        <ecNumber evidence="2">2.1.1.-</ecNumber>
    </recommendedName>
    <alternativeName>
        <fullName>Mitochondrial 12S rRNA dimethylase 1</fullName>
    </alternativeName>
    <alternativeName>
        <fullName>Mitochondrial transcription factor B1</fullName>
        <shortName>mtTFB1</shortName>
    </alternativeName>
    <alternativeName>
        <fullName>S-adenosylmethionine-6-N', N'-adenosyl(rRNA) dimethyltransferase 1</fullName>
    </alternativeName>
</protein>
<name>TFB1M_BOVIN</name>
<feature type="transit peptide" description="Mitochondrion" evidence="3">
    <location>
        <begin position="1"/>
        <end position="27"/>
    </location>
</feature>
<feature type="chain" id="PRO_0000273170" description="Mitochondrial dimethyladenosine transferase 1">
    <location>
        <begin position="28"/>
        <end position="341"/>
    </location>
</feature>
<feature type="binding site" evidence="1">
    <location>
        <position position="38"/>
    </location>
    <ligand>
        <name>S-adenosyl-L-methionine</name>
        <dbReference type="ChEBI" id="CHEBI:59789"/>
    </ligand>
</feature>
<feature type="binding site" evidence="2">
    <location>
        <position position="63"/>
    </location>
    <ligand>
        <name>S-adenosyl-L-methionine</name>
        <dbReference type="ChEBI" id="CHEBI:59789"/>
    </ligand>
</feature>
<feature type="binding site" evidence="1">
    <location>
        <position position="85"/>
    </location>
    <ligand>
        <name>S-adenosyl-L-methionine</name>
        <dbReference type="ChEBI" id="CHEBI:59789"/>
    </ligand>
</feature>
<feature type="binding site" evidence="1">
    <location>
        <position position="86"/>
    </location>
    <ligand>
        <name>S-adenosyl-L-methionine</name>
        <dbReference type="ChEBI" id="CHEBI:59789"/>
    </ligand>
</feature>
<feature type="binding site" evidence="1">
    <location>
        <position position="111"/>
    </location>
    <ligand>
        <name>S-adenosyl-L-methionine</name>
        <dbReference type="ChEBI" id="CHEBI:59789"/>
    </ligand>
</feature>
<feature type="binding site" evidence="1">
    <location>
        <position position="112"/>
    </location>
    <ligand>
        <name>S-adenosyl-L-methionine</name>
        <dbReference type="ChEBI" id="CHEBI:59789"/>
    </ligand>
</feature>
<feature type="binding site" evidence="2">
    <location>
        <position position="141"/>
    </location>
    <ligand>
        <name>S-adenosyl-L-methionine</name>
        <dbReference type="ChEBI" id="CHEBI:59789"/>
    </ligand>
</feature>
<feature type="splice variant" id="VSP_022489" description="In isoform 2." evidence="4">
    <original>VDSG</original>
    <variation>NVIP</variation>
    <location>
        <begin position="223"/>
        <end position="226"/>
    </location>
</feature>
<feature type="splice variant" id="VSP_022490" description="In isoform 2." evidence="4">
    <location>
        <begin position="227"/>
        <end position="341"/>
    </location>
</feature>
<keyword id="KW-0025">Alternative splicing</keyword>
<keyword id="KW-0238">DNA-binding</keyword>
<keyword id="KW-0489">Methyltransferase</keyword>
<keyword id="KW-0496">Mitochondrion</keyword>
<keyword id="KW-1185">Reference proteome</keyword>
<keyword id="KW-0694">RNA-binding</keyword>
<keyword id="KW-0698">rRNA processing</keyword>
<keyword id="KW-0949">S-adenosyl-L-methionine</keyword>
<keyword id="KW-0804">Transcription</keyword>
<keyword id="KW-0805">Transcription regulation</keyword>
<keyword id="KW-0808">Transferase</keyword>
<keyword id="KW-0809">Transit peptide</keyword>
<evidence type="ECO:0000250" key="1">
    <source>
        <dbReference type="UniProtKB" id="Q8JZM0"/>
    </source>
</evidence>
<evidence type="ECO:0000250" key="2">
    <source>
        <dbReference type="UniProtKB" id="Q8WVM0"/>
    </source>
</evidence>
<evidence type="ECO:0000255" key="3"/>
<evidence type="ECO:0000303" key="4">
    <source ref="1"/>
</evidence>
<evidence type="ECO:0000305" key="5"/>
<dbReference type="EC" id="2.1.1.-" evidence="2"/>
<dbReference type="EMBL" id="BC109841">
    <property type="protein sequence ID" value="AAI09842.1"/>
    <property type="molecule type" value="mRNA"/>
</dbReference>
<dbReference type="EMBL" id="DT811342">
    <property type="status" value="NOT_ANNOTATED_CDS"/>
    <property type="molecule type" value="mRNA"/>
</dbReference>
<dbReference type="RefSeq" id="NP_001070364.1">
    <molecule id="Q2TBQ0-2"/>
    <property type="nucleotide sequence ID" value="NM_001076896.2"/>
</dbReference>
<dbReference type="RefSeq" id="NP_001108082.1">
    <molecule id="Q2TBQ0-1"/>
    <property type="nucleotide sequence ID" value="NM_001114610.1"/>
</dbReference>
<dbReference type="RefSeq" id="XP_024852475.1">
    <molecule id="Q2TBQ0-1"/>
    <property type="nucleotide sequence ID" value="XM_024996707.2"/>
</dbReference>
<dbReference type="SMR" id="Q2TBQ0"/>
<dbReference type="FunCoup" id="Q2TBQ0">
    <property type="interactions" value="323"/>
</dbReference>
<dbReference type="STRING" id="9913.ENSBTAP00000042644"/>
<dbReference type="PaxDb" id="9913-ENSBTAP00000042644"/>
<dbReference type="Ensembl" id="ENSBTAT00000045233.4">
    <molecule id="Q2TBQ0-2"/>
    <property type="protein sequence ID" value="ENSBTAP00000042642.3"/>
    <property type="gene ID" value="ENSBTAG00000031895.5"/>
</dbReference>
<dbReference type="Ensembl" id="ENSBTAT00000045235.4">
    <molecule id="Q2TBQ0-1"/>
    <property type="protein sequence ID" value="ENSBTAP00000042644.3"/>
    <property type="gene ID" value="ENSBTAG00000031895.5"/>
</dbReference>
<dbReference type="GeneID" id="533438"/>
<dbReference type="KEGG" id="bta:533438"/>
<dbReference type="CTD" id="51106"/>
<dbReference type="VEuPathDB" id="HostDB:ENSBTAG00000031895"/>
<dbReference type="eggNOG" id="KOG0821">
    <property type="taxonomic scope" value="Eukaryota"/>
</dbReference>
<dbReference type="GeneTree" id="ENSGT00950000183142"/>
<dbReference type="HOGENOM" id="CLU_041220_7_0_1"/>
<dbReference type="InParanoid" id="Q2TBQ0"/>
<dbReference type="OMA" id="RIEQPFK"/>
<dbReference type="OrthoDB" id="16079at2759"/>
<dbReference type="TreeFam" id="TF300798"/>
<dbReference type="Proteomes" id="UP000009136">
    <property type="component" value="Chromosome 9"/>
</dbReference>
<dbReference type="Bgee" id="ENSBTAG00000031895">
    <property type="expression patterns" value="Expressed in oocyte and 105 other cell types or tissues"/>
</dbReference>
<dbReference type="GO" id="GO:0005759">
    <property type="term" value="C:mitochondrial matrix"/>
    <property type="evidence" value="ECO:0000318"/>
    <property type="project" value="GO_Central"/>
</dbReference>
<dbReference type="GO" id="GO:0003677">
    <property type="term" value="F:DNA binding"/>
    <property type="evidence" value="ECO:0007669"/>
    <property type="project" value="UniProtKB-KW"/>
</dbReference>
<dbReference type="GO" id="GO:0034246">
    <property type="term" value="F:mitochondrial transcription factor activity"/>
    <property type="evidence" value="ECO:0000318"/>
    <property type="project" value="GO_Central"/>
</dbReference>
<dbReference type="GO" id="GO:0003723">
    <property type="term" value="F:RNA binding"/>
    <property type="evidence" value="ECO:0007669"/>
    <property type="project" value="UniProtKB-KW"/>
</dbReference>
<dbReference type="GO" id="GO:0000179">
    <property type="term" value="F:rRNA (adenine-N6,N6-)-dimethyltransferase activity"/>
    <property type="evidence" value="ECO:0000250"/>
    <property type="project" value="UniProtKB"/>
</dbReference>
<dbReference type="GO" id="GO:1904047">
    <property type="term" value="F:S-adenosyl-L-methionine binding"/>
    <property type="evidence" value="ECO:0000250"/>
    <property type="project" value="UniProtKB"/>
</dbReference>
<dbReference type="GO" id="GO:0031167">
    <property type="term" value="P:rRNA methylation"/>
    <property type="evidence" value="ECO:0000250"/>
    <property type="project" value="UniProtKB"/>
</dbReference>
<dbReference type="GO" id="GO:0006391">
    <property type="term" value="P:transcription initiation at mitochondrial promoter"/>
    <property type="evidence" value="ECO:0000318"/>
    <property type="project" value="GO_Central"/>
</dbReference>
<dbReference type="CDD" id="cd02440">
    <property type="entry name" value="AdoMet_MTases"/>
    <property type="match status" value="1"/>
</dbReference>
<dbReference type="FunFam" id="1.10.8.100:FF:000004">
    <property type="entry name" value="rRNA adenine N(6)-methyltransferase"/>
    <property type="match status" value="1"/>
</dbReference>
<dbReference type="FunFam" id="3.40.50.150:FF:000109">
    <property type="entry name" value="rRNA adenine N(6)-methyltransferase"/>
    <property type="match status" value="1"/>
</dbReference>
<dbReference type="Gene3D" id="1.10.8.100">
    <property type="entry name" value="Ribosomal RNA adenine dimethylase-like, domain 2"/>
    <property type="match status" value="1"/>
</dbReference>
<dbReference type="Gene3D" id="3.40.50.150">
    <property type="entry name" value="Vaccinia Virus protein VP39"/>
    <property type="match status" value="1"/>
</dbReference>
<dbReference type="HAMAP" id="MF_00607">
    <property type="entry name" value="16SrRNA_methyltr_A"/>
    <property type="match status" value="1"/>
</dbReference>
<dbReference type="InterPro" id="IPR001737">
    <property type="entry name" value="KsgA/Erm"/>
</dbReference>
<dbReference type="InterPro" id="IPR023165">
    <property type="entry name" value="rRNA_Ade_diMease-like_C"/>
</dbReference>
<dbReference type="InterPro" id="IPR020596">
    <property type="entry name" value="rRNA_Ade_Mease_Trfase_CS"/>
</dbReference>
<dbReference type="InterPro" id="IPR020598">
    <property type="entry name" value="rRNA_Ade_methylase_Trfase_N"/>
</dbReference>
<dbReference type="InterPro" id="IPR011530">
    <property type="entry name" value="rRNA_adenine_dimethylase"/>
</dbReference>
<dbReference type="InterPro" id="IPR029063">
    <property type="entry name" value="SAM-dependent_MTases_sf"/>
</dbReference>
<dbReference type="NCBIfam" id="TIGR00755">
    <property type="entry name" value="ksgA"/>
    <property type="match status" value="1"/>
</dbReference>
<dbReference type="PANTHER" id="PTHR11727">
    <property type="entry name" value="DIMETHYLADENOSINE TRANSFERASE"/>
    <property type="match status" value="1"/>
</dbReference>
<dbReference type="PANTHER" id="PTHR11727:SF17">
    <property type="entry name" value="DIMETHYLADENOSINE TRANSFERASE 1, MITOCHONDRIAL"/>
    <property type="match status" value="1"/>
</dbReference>
<dbReference type="Pfam" id="PF00398">
    <property type="entry name" value="RrnaAD"/>
    <property type="match status" value="1"/>
</dbReference>
<dbReference type="SMART" id="SM00650">
    <property type="entry name" value="rADc"/>
    <property type="match status" value="1"/>
</dbReference>
<dbReference type="SUPFAM" id="SSF53335">
    <property type="entry name" value="S-adenosyl-L-methionine-dependent methyltransferases"/>
    <property type="match status" value="1"/>
</dbReference>
<dbReference type="PROSITE" id="PS01131">
    <property type="entry name" value="RRNA_A_DIMETH"/>
    <property type="match status" value="1"/>
</dbReference>
<dbReference type="PROSITE" id="PS51689">
    <property type="entry name" value="SAM_RNA_A_N6_MT"/>
    <property type="match status" value="1"/>
</dbReference>
<gene>
    <name type="primary">TFB1M</name>
</gene>
<reference key="1">
    <citation type="submission" date="2005-11" db="EMBL/GenBank/DDBJ databases">
        <authorList>
            <consortium name="NIH - Mammalian Gene Collection (MGC) project"/>
        </authorList>
    </citation>
    <scope>NUCLEOTIDE SEQUENCE [LARGE SCALE MRNA] (ISOFORMS 1 AND 2)</scope>
    <source>
        <strain>Crossbred X Angus</strain>
        <tissue>Liver</tissue>
    </source>
</reference>
<proteinExistence type="evidence at transcript level"/>